<accession>Q38XU0</accession>
<feature type="chain" id="PRO_0000266340" description="Guanylate kinase">
    <location>
        <begin position="1"/>
        <end position="203"/>
    </location>
</feature>
<feature type="domain" description="Guanylate kinase-like" evidence="1">
    <location>
        <begin position="5"/>
        <end position="184"/>
    </location>
</feature>
<feature type="binding site" evidence="1">
    <location>
        <begin position="12"/>
        <end position="19"/>
    </location>
    <ligand>
        <name>ATP</name>
        <dbReference type="ChEBI" id="CHEBI:30616"/>
    </ligand>
</feature>
<keyword id="KW-0067">ATP-binding</keyword>
<keyword id="KW-0963">Cytoplasm</keyword>
<keyword id="KW-0418">Kinase</keyword>
<keyword id="KW-0547">Nucleotide-binding</keyword>
<keyword id="KW-1185">Reference proteome</keyword>
<keyword id="KW-0808">Transferase</keyword>
<name>KGUA_LATSS</name>
<organism>
    <name type="scientific">Latilactobacillus sakei subsp. sakei (strain 23K)</name>
    <name type="common">Lactobacillus sakei subsp. sakei</name>
    <dbReference type="NCBI Taxonomy" id="314315"/>
    <lineage>
        <taxon>Bacteria</taxon>
        <taxon>Bacillati</taxon>
        <taxon>Bacillota</taxon>
        <taxon>Bacilli</taxon>
        <taxon>Lactobacillales</taxon>
        <taxon>Lactobacillaceae</taxon>
        <taxon>Latilactobacillus</taxon>
    </lineage>
</organism>
<comment type="function">
    <text evidence="1">Essential for recycling GMP and indirectly, cGMP.</text>
</comment>
<comment type="catalytic activity">
    <reaction evidence="1">
        <text>GMP + ATP = GDP + ADP</text>
        <dbReference type="Rhea" id="RHEA:20780"/>
        <dbReference type="ChEBI" id="CHEBI:30616"/>
        <dbReference type="ChEBI" id="CHEBI:58115"/>
        <dbReference type="ChEBI" id="CHEBI:58189"/>
        <dbReference type="ChEBI" id="CHEBI:456216"/>
        <dbReference type="EC" id="2.7.4.8"/>
    </reaction>
</comment>
<comment type="subcellular location">
    <subcellularLocation>
        <location evidence="1">Cytoplasm</location>
    </subcellularLocation>
</comment>
<comment type="similarity">
    <text evidence="1">Belongs to the guanylate kinase family.</text>
</comment>
<reference key="1">
    <citation type="journal article" date="2005" name="Nat. Biotechnol.">
        <title>The complete genome sequence of the meat-borne lactic acid bacterium Lactobacillus sakei 23K.</title>
        <authorList>
            <person name="Chaillou S."/>
            <person name="Champomier-Verges M.-C."/>
            <person name="Cornet M."/>
            <person name="Crutz-Le Coq A.-M."/>
            <person name="Dudez A.-M."/>
            <person name="Martin V."/>
            <person name="Beaufils S."/>
            <person name="Darbon-Rongere E."/>
            <person name="Bossy R."/>
            <person name="Loux V."/>
            <person name="Zagorec M."/>
        </authorList>
    </citation>
    <scope>NUCLEOTIDE SEQUENCE [LARGE SCALE GENOMIC DNA]</scope>
    <source>
        <strain>23K</strain>
    </source>
</reference>
<sequence length="203" mass="23476">MSNRGMLIVLSGPSGVGKGTVRQAMLEDEFRDFHYSVSMTTRKPRPGEQDGVDYYFVSKEEFEQEIANDGMLEYAQYVDNYYGTPMKYVNQTLESGRDVLLEIEVQGAMQVREKCPDGVFIFLTPPDLLELRNRIQKRGTDDQATIDKRMQKAADEIRMMENYDYAVVNDEIPNAVQRIEKIIESEHLRVPRVIDQYKKMIGE</sequence>
<gene>
    <name evidence="1" type="primary">gmk</name>
    <name type="ordered locus">LCA_0685</name>
</gene>
<dbReference type="EC" id="2.7.4.8" evidence="1"/>
<dbReference type="EMBL" id="CR936503">
    <property type="protein sequence ID" value="CAI54989.1"/>
    <property type="molecule type" value="Genomic_DNA"/>
</dbReference>
<dbReference type="RefSeq" id="WP_011374394.1">
    <property type="nucleotide sequence ID" value="NC_007576.1"/>
</dbReference>
<dbReference type="SMR" id="Q38XU0"/>
<dbReference type="STRING" id="314315.LCA_0685"/>
<dbReference type="GeneID" id="57133539"/>
<dbReference type="KEGG" id="lsa:LCA_0685"/>
<dbReference type="eggNOG" id="COG0194">
    <property type="taxonomic scope" value="Bacteria"/>
</dbReference>
<dbReference type="HOGENOM" id="CLU_001715_1_0_9"/>
<dbReference type="OrthoDB" id="9808150at2"/>
<dbReference type="Proteomes" id="UP000002707">
    <property type="component" value="Chromosome"/>
</dbReference>
<dbReference type="GO" id="GO:0005829">
    <property type="term" value="C:cytosol"/>
    <property type="evidence" value="ECO:0007669"/>
    <property type="project" value="TreeGrafter"/>
</dbReference>
<dbReference type="GO" id="GO:0005524">
    <property type="term" value="F:ATP binding"/>
    <property type="evidence" value="ECO:0007669"/>
    <property type="project" value="UniProtKB-UniRule"/>
</dbReference>
<dbReference type="GO" id="GO:0004385">
    <property type="term" value="F:guanylate kinase activity"/>
    <property type="evidence" value="ECO:0007669"/>
    <property type="project" value="UniProtKB-UniRule"/>
</dbReference>
<dbReference type="CDD" id="cd00071">
    <property type="entry name" value="GMPK"/>
    <property type="match status" value="1"/>
</dbReference>
<dbReference type="FunFam" id="3.40.50.300:FF:000855">
    <property type="entry name" value="Guanylate kinase"/>
    <property type="match status" value="1"/>
</dbReference>
<dbReference type="FunFam" id="3.30.63.10:FF:000002">
    <property type="entry name" value="Guanylate kinase 1"/>
    <property type="match status" value="1"/>
</dbReference>
<dbReference type="Gene3D" id="3.30.63.10">
    <property type="entry name" value="Guanylate Kinase phosphate binding domain"/>
    <property type="match status" value="1"/>
</dbReference>
<dbReference type="Gene3D" id="3.40.50.300">
    <property type="entry name" value="P-loop containing nucleotide triphosphate hydrolases"/>
    <property type="match status" value="2"/>
</dbReference>
<dbReference type="HAMAP" id="MF_00328">
    <property type="entry name" value="Guanylate_kinase"/>
    <property type="match status" value="1"/>
</dbReference>
<dbReference type="InterPro" id="IPR008145">
    <property type="entry name" value="GK/Ca_channel_bsu"/>
</dbReference>
<dbReference type="InterPro" id="IPR008144">
    <property type="entry name" value="Guanylate_kin-like_dom"/>
</dbReference>
<dbReference type="InterPro" id="IPR017665">
    <property type="entry name" value="Guanylate_kinase"/>
</dbReference>
<dbReference type="InterPro" id="IPR020590">
    <property type="entry name" value="Guanylate_kinase_CS"/>
</dbReference>
<dbReference type="InterPro" id="IPR027417">
    <property type="entry name" value="P-loop_NTPase"/>
</dbReference>
<dbReference type="NCBIfam" id="TIGR03263">
    <property type="entry name" value="guanyl_kin"/>
    <property type="match status" value="1"/>
</dbReference>
<dbReference type="PANTHER" id="PTHR23117:SF13">
    <property type="entry name" value="GUANYLATE KINASE"/>
    <property type="match status" value="1"/>
</dbReference>
<dbReference type="PANTHER" id="PTHR23117">
    <property type="entry name" value="GUANYLATE KINASE-RELATED"/>
    <property type="match status" value="1"/>
</dbReference>
<dbReference type="Pfam" id="PF00625">
    <property type="entry name" value="Guanylate_kin"/>
    <property type="match status" value="1"/>
</dbReference>
<dbReference type="SMART" id="SM00072">
    <property type="entry name" value="GuKc"/>
    <property type="match status" value="1"/>
</dbReference>
<dbReference type="SUPFAM" id="SSF52540">
    <property type="entry name" value="P-loop containing nucleoside triphosphate hydrolases"/>
    <property type="match status" value="1"/>
</dbReference>
<dbReference type="PROSITE" id="PS00856">
    <property type="entry name" value="GUANYLATE_KINASE_1"/>
    <property type="match status" value="1"/>
</dbReference>
<dbReference type="PROSITE" id="PS50052">
    <property type="entry name" value="GUANYLATE_KINASE_2"/>
    <property type="match status" value="1"/>
</dbReference>
<proteinExistence type="inferred from homology"/>
<evidence type="ECO:0000255" key="1">
    <source>
        <dbReference type="HAMAP-Rule" id="MF_00328"/>
    </source>
</evidence>
<protein>
    <recommendedName>
        <fullName evidence="1">Guanylate kinase</fullName>
        <ecNumber evidence="1">2.7.4.8</ecNumber>
    </recommendedName>
    <alternativeName>
        <fullName evidence="1">GMP kinase</fullName>
    </alternativeName>
</protein>